<accession>Q92413</accession>
<accession>C8VPG9</accession>
<accession>Q5BCC0</accession>
<comment type="catalytic activity">
    <reaction evidence="2">
        <text>a 2-oxocarboxylate + L-ornithine = L-glutamate 5-semialdehyde + an L-alpha-amino acid</text>
        <dbReference type="Rhea" id="RHEA:13877"/>
        <dbReference type="ChEBI" id="CHEBI:35179"/>
        <dbReference type="ChEBI" id="CHEBI:46911"/>
        <dbReference type="ChEBI" id="CHEBI:58066"/>
        <dbReference type="ChEBI" id="CHEBI:59869"/>
        <dbReference type="EC" id="2.6.1.13"/>
    </reaction>
</comment>
<comment type="cofactor">
    <cofactor>
        <name>pyridoxal 5'-phosphate</name>
        <dbReference type="ChEBI" id="CHEBI:597326"/>
    </cofactor>
</comment>
<comment type="pathway">
    <text>Amino-acid biosynthesis; L-proline biosynthesis; L-glutamate 5-semialdehyde from L-ornithine: step 1/1.</text>
</comment>
<comment type="subcellular location">
    <subcellularLocation>
        <location>Cytoplasm</location>
    </subcellularLocation>
</comment>
<comment type="similarity">
    <text evidence="3">Belongs to the class-III pyridoxal-phosphate-dependent aminotransferase family.</text>
</comment>
<organism>
    <name type="scientific">Emericella nidulans (strain FGSC A4 / ATCC 38163 / CBS 112.46 / NRRL 194 / M139)</name>
    <name type="common">Aspergillus nidulans</name>
    <dbReference type="NCBI Taxonomy" id="227321"/>
    <lineage>
        <taxon>Eukaryota</taxon>
        <taxon>Fungi</taxon>
        <taxon>Dikarya</taxon>
        <taxon>Ascomycota</taxon>
        <taxon>Pezizomycotina</taxon>
        <taxon>Eurotiomycetes</taxon>
        <taxon>Eurotiomycetidae</taxon>
        <taxon>Eurotiales</taxon>
        <taxon>Aspergillaceae</taxon>
        <taxon>Aspergillus</taxon>
        <taxon>Aspergillus subgen. Nidulantes</taxon>
    </lineage>
</organism>
<reference key="1">
    <citation type="journal article" date="1999" name="Curr. Genet.">
        <title>Cloning, characterisation and regulation of the ornithine transaminase (otaA) gene of Aspergillus nidulans.</title>
        <authorList>
            <person name="Dzikowska A."/>
            <person name="Swianiewicz M."/>
            <person name="Talarczyk A."/>
            <person name="Wisniewska M."/>
            <person name="Goras M."/>
            <person name="Scazzocchio C."/>
            <person name="Weglenski P."/>
        </authorList>
    </citation>
    <scope>NUCLEOTIDE SEQUENCE [GENOMIC DNA]</scope>
    <scope>CATALYTIC ACTIVITY</scope>
</reference>
<reference key="2">
    <citation type="journal article" date="2005" name="Nature">
        <title>Sequencing of Aspergillus nidulans and comparative analysis with A. fumigatus and A. oryzae.</title>
        <authorList>
            <person name="Galagan J.E."/>
            <person name="Calvo S.E."/>
            <person name="Cuomo C."/>
            <person name="Ma L.-J."/>
            <person name="Wortman J.R."/>
            <person name="Batzoglou S."/>
            <person name="Lee S.-I."/>
            <person name="Bastuerkmen M."/>
            <person name="Spevak C.C."/>
            <person name="Clutterbuck J."/>
            <person name="Kapitonov V."/>
            <person name="Jurka J."/>
            <person name="Scazzocchio C."/>
            <person name="Farman M.L."/>
            <person name="Butler J."/>
            <person name="Purcell S."/>
            <person name="Harris S."/>
            <person name="Braus G.H."/>
            <person name="Draht O."/>
            <person name="Busch S."/>
            <person name="D'Enfert C."/>
            <person name="Bouchier C."/>
            <person name="Goldman G.H."/>
            <person name="Bell-Pedersen D."/>
            <person name="Griffiths-Jones S."/>
            <person name="Doonan J.H."/>
            <person name="Yu J."/>
            <person name="Vienken K."/>
            <person name="Pain A."/>
            <person name="Freitag M."/>
            <person name="Selker E.U."/>
            <person name="Archer D.B."/>
            <person name="Penalva M.A."/>
            <person name="Oakley B.R."/>
            <person name="Momany M."/>
            <person name="Tanaka T."/>
            <person name="Kumagai T."/>
            <person name="Asai K."/>
            <person name="Machida M."/>
            <person name="Nierman W.C."/>
            <person name="Denning D.W."/>
            <person name="Caddick M.X."/>
            <person name="Hynes M."/>
            <person name="Paoletti M."/>
            <person name="Fischer R."/>
            <person name="Miller B.L."/>
            <person name="Dyer P.S."/>
            <person name="Sachs M.S."/>
            <person name="Osmani S.A."/>
            <person name="Birren B.W."/>
        </authorList>
    </citation>
    <scope>NUCLEOTIDE SEQUENCE [LARGE SCALE GENOMIC DNA]</scope>
    <source>
        <strain>FGSC A4 / ATCC 38163 / CBS 112.46 / NRRL 194 / M139</strain>
    </source>
</reference>
<reference key="3">
    <citation type="journal article" date="2009" name="Fungal Genet. Biol.">
        <title>The 2008 update of the Aspergillus nidulans genome annotation: a community effort.</title>
        <authorList>
            <person name="Wortman J.R."/>
            <person name="Gilsenan J.M."/>
            <person name="Joardar V."/>
            <person name="Deegan J."/>
            <person name="Clutterbuck J."/>
            <person name="Andersen M.R."/>
            <person name="Archer D."/>
            <person name="Bencina M."/>
            <person name="Braus G."/>
            <person name="Coutinho P."/>
            <person name="von Dohren H."/>
            <person name="Doonan J."/>
            <person name="Driessen A.J."/>
            <person name="Durek P."/>
            <person name="Espeso E."/>
            <person name="Fekete E."/>
            <person name="Flipphi M."/>
            <person name="Estrada C.G."/>
            <person name="Geysens S."/>
            <person name="Goldman G."/>
            <person name="de Groot P.W."/>
            <person name="Hansen K."/>
            <person name="Harris S.D."/>
            <person name="Heinekamp T."/>
            <person name="Helmstaedt K."/>
            <person name="Henrissat B."/>
            <person name="Hofmann G."/>
            <person name="Homan T."/>
            <person name="Horio T."/>
            <person name="Horiuchi H."/>
            <person name="James S."/>
            <person name="Jones M."/>
            <person name="Karaffa L."/>
            <person name="Karanyi Z."/>
            <person name="Kato M."/>
            <person name="Keller N."/>
            <person name="Kelly D.E."/>
            <person name="Kiel J.A."/>
            <person name="Kim J.M."/>
            <person name="van der Klei I.J."/>
            <person name="Klis F.M."/>
            <person name="Kovalchuk A."/>
            <person name="Krasevec N."/>
            <person name="Kubicek C.P."/>
            <person name="Liu B."/>
            <person name="Maccabe A."/>
            <person name="Meyer V."/>
            <person name="Mirabito P."/>
            <person name="Miskei M."/>
            <person name="Mos M."/>
            <person name="Mullins J."/>
            <person name="Nelson D.R."/>
            <person name="Nielsen J."/>
            <person name="Oakley B.R."/>
            <person name="Osmani S.A."/>
            <person name="Pakula T."/>
            <person name="Paszewski A."/>
            <person name="Paulsen I."/>
            <person name="Pilsyk S."/>
            <person name="Pocsi I."/>
            <person name="Punt P.J."/>
            <person name="Ram A.F."/>
            <person name="Ren Q."/>
            <person name="Robellet X."/>
            <person name="Robson G."/>
            <person name="Seiboth B."/>
            <person name="van Solingen P."/>
            <person name="Specht T."/>
            <person name="Sun J."/>
            <person name="Taheri-Talesh N."/>
            <person name="Takeshita N."/>
            <person name="Ussery D."/>
            <person name="vanKuyk P.A."/>
            <person name="Visser H."/>
            <person name="van de Vondervoort P.J."/>
            <person name="de Vries R.P."/>
            <person name="Walton J."/>
            <person name="Xiang X."/>
            <person name="Xiong Y."/>
            <person name="Zeng A.P."/>
            <person name="Brandt B.W."/>
            <person name="Cornell M.J."/>
            <person name="van den Hondel C.A."/>
            <person name="Visser J."/>
            <person name="Oliver S.G."/>
            <person name="Turner G."/>
        </authorList>
    </citation>
    <scope>GENOME REANNOTATION</scope>
    <source>
        <strain>FGSC A4 / ATCC 38163 / CBS 112.46 / NRRL 194 / M139</strain>
    </source>
</reference>
<protein>
    <recommendedName>
        <fullName>Ornithine aminotransferase</fullName>
        <ecNumber evidence="2">2.6.1.13</ecNumber>
    </recommendedName>
    <alternativeName>
        <fullName>Ornithine--oxo-acid aminotransferase</fullName>
    </alternativeName>
</protein>
<evidence type="ECO:0000250" key="1"/>
<evidence type="ECO:0000269" key="2">
    <source>
    </source>
</evidence>
<evidence type="ECO:0000305" key="3"/>
<proteinExistence type="evidence at protein level"/>
<feature type="chain" id="PRO_0000120497" description="Ornithine aminotransferase">
    <location>
        <begin position="1"/>
        <end position="454"/>
    </location>
</feature>
<feature type="modified residue" description="N6-(pyridoxal phosphate)lysine" evidence="1">
    <location>
        <position position="280"/>
    </location>
</feature>
<feature type="sequence conflict" description="In Ref. 1; AAB18259." evidence="3" ref="1">
    <original>AL</original>
    <variation>V</variation>
    <location>
        <begin position="200"/>
        <end position="201"/>
    </location>
</feature>
<sequence>MTSNGTNGSATAYHASSTQEAIQAENDFAAHNYHPLPVVFARAQGTSVWDPEGRHYLDFLSAYSAVNQGHCHPKLVAALVDQASRLTLSSRAFYNDVFPKFAEMVTKYFGFDMVLPMNTGAEAVETGIKIARKWGYKVKGIPENEAIILSAENNFHGRTMAAISLSSDPESRENYGPYVPNIGCTIPGTEKPITYNDKAALREAFEKAGSNLAAFLVEPIQGEAGIIVPDDDYLQLARSLCDQHNVLLICDEIQTGIARTGKLLCHEWSGIKPDMVLLGKAISGGMYPVSCVLGRKDVMLTVEPGTHGSTYGGNPLACAVAIRALEVVQEENMVERAEKLGQAFRSGLEAIQNPIIQTVRGKGLLNAIVIDESKTNGHTAWDLCMLMKEKGLLAKPTHQNIIRLAPPLVITEEEIAKALEIIKAAVAELPNLKGAAEDKVVPPPEKKVKITLEN</sequence>
<keyword id="KW-0032">Aminotransferase</keyword>
<keyword id="KW-0963">Cytoplasm</keyword>
<keyword id="KW-0663">Pyridoxal phosphate</keyword>
<keyword id="KW-1185">Reference proteome</keyword>
<keyword id="KW-0808">Transferase</keyword>
<gene>
    <name type="primary">otaA</name>
    <name type="ORF">AN1810</name>
</gene>
<dbReference type="EC" id="2.6.1.13" evidence="2"/>
<dbReference type="EMBL" id="U74303">
    <property type="protein sequence ID" value="AAB18259.2"/>
    <property type="molecule type" value="Genomic_DNA"/>
</dbReference>
<dbReference type="EMBL" id="AACD01000029">
    <property type="protein sequence ID" value="EAA64975.1"/>
    <property type="molecule type" value="Genomic_DNA"/>
</dbReference>
<dbReference type="EMBL" id="BN001307">
    <property type="protein sequence ID" value="CBF85604.1"/>
    <property type="molecule type" value="Genomic_DNA"/>
</dbReference>
<dbReference type="RefSeq" id="XP_659414.1">
    <property type="nucleotide sequence ID" value="XM_654322.2"/>
</dbReference>
<dbReference type="SMR" id="Q92413"/>
<dbReference type="FunCoup" id="Q92413">
    <property type="interactions" value="797"/>
</dbReference>
<dbReference type="STRING" id="227321.Q92413"/>
<dbReference type="EnsemblFungi" id="CBF85604">
    <property type="protein sequence ID" value="CBF85604"/>
    <property type="gene ID" value="ANIA_01810"/>
</dbReference>
<dbReference type="GeneID" id="2875186"/>
<dbReference type="KEGG" id="ani:ANIA_01810"/>
<dbReference type="VEuPathDB" id="FungiDB:AN1810"/>
<dbReference type="eggNOG" id="KOG1402">
    <property type="taxonomic scope" value="Eukaryota"/>
</dbReference>
<dbReference type="HOGENOM" id="CLU_016922_10_3_1"/>
<dbReference type="InParanoid" id="Q92413"/>
<dbReference type="OMA" id="RSAWDLC"/>
<dbReference type="OrthoDB" id="10261433at2759"/>
<dbReference type="UniPathway" id="UPA00098">
    <property type="reaction ID" value="UER00358"/>
</dbReference>
<dbReference type="Proteomes" id="UP000000560">
    <property type="component" value="Chromosome VII"/>
</dbReference>
<dbReference type="GO" id="GO:0005737">
    <property type="term" value="C:cytoplasm"/>
    <property type="evidence" value="ECO:0000318"/>
    <property type="project" value="GO_Central"/>
</dbReference>
<dbReference type="GO" id="GO:0005829">
    <property type="term" value="C:cytosol"/>
    <property type="evidence" value="ECO:0007669"/>
    <property type="project" value="EnsemblFungi"/>
</dbReference>
<dbReference type="GO" id="GO:0042802">
    <property type="term" value="F:identical protein binding"/>
    <property type="evidence" value="ECO:0000318"/>
    <property type="project" value="GO_Central"/>
</dbReference>
<dbReference type="GO" id="GO:0004587">
    <property type="term" value="F:ornithine aminotransferase activity"/>
    <property type="evidence" value="ECO:0000314"/>
    <property type="project" value="AspGD"/>
</dbReference>
<dbReference type="GO" id="GO:0030170">
    <property type="term" value="F:pyridoxal phosphate binding"/>
    <property type="evidence" value="ECO:0000318"/>
    <property type="project" value="GO_Central"/>
</dbReference>
<dbReference type="GO" id="GO:0019544">
    <property type="term" value="P:arginine catabolic process to glutamate"/>
    <property type="evidence" value="ECO:0000318"/>
    <property type="project" value="GO_Central"/>
</dbReference>
<dbReference type="GO" id="GO:0010121">
    <property type="term" value="P:arginine catabolic process to proline via ornithine"/>
    <property type="evidence" value="ECO:0000318"/>
    <property type="project" value="GO_Central"/>
</dbReference>
<dbReference type="GO" id="GO:0055129">
    <property type="term" value="P:L-proline biosynthetic process"/>
    <property type="evidence" value="ECO:0007669"/>
    <property type="project" value="UniProtKB-UniPathway"/>
</dbReference>
<dbReference type="GO" id="GO:0006591">
    <property type="term" value="P:ornithine metabolic process"/>
    <property type="evidence" value="ECO:0007669"/>
    <property type="project" value="EnsemblFungi"/>
</dbReference>
<dbReference type="CDD" id="cd00610">
    <property type="entry name" value="OAT_like"/>
    <property type="match status" value="1"/>
</dbReference>
<dbReference type="FunFam" id="3.40.640.10:FF:000011">
    <property type="entry name" value="Ornithine aminotransferase"/>
    <property type="match status" value="1"/>
</dbReference>
<dbReference type="FunFam" id="3.90.1150.10:FF:000152">
    <property type="entry name" value="Ornithine aminotransferase"/>
    <property type="match status" value="1"/>
</dbReference>
<dbReference type="Gene3D" id="3.90.1150.10">
    <property type="entry name" value="Aspartate Aminotransferase, domain 1"/>
    <property type="match status" value="1"/>
</dbReference>
<dbReference type="Gene3D" id="3.40.640.10">
    <property type="entry name" value="Type I PLP-dependent aspartate aminotransferase-like (Major domain)"/>
    <property type="match status" value="1"/>
</dbReference>
<dbReference type="InterPro" id="IPR005814">
    <property type="entry name" value="Aminotrans_3"/>
</dbReference>
<dbReference type="InterPro" id="IPR049704">
    <property type="entry name" value="Aminotrans_3_PPA_site"/>
</dbReference>
<dbReference type="InterPro" id="IPR050103">
    <property type="entry name" value="Class-III_PLP-dep_AT"/>
</dbReference>
<dbReference type="InterPro" id="IPR010164">
    <property type="entry name" value="Orn_aminotrans"/>
</dbReference>
<dbReference type="InterPro" id="IPR015424">
    <property type="entry name" value="PyrdxlP-dep_Trfase"/>
</dbReference>
<dbReference type="InterPro" id="IPR015421">
    <property type="entry name" value="PyrdxlP-dep_Trfase_major"/>
</dbReference>
<dbReference type="InterPro" id="IPR015422">
    <property type="entry name" value="PyrdxlP-dep_Trfase_small"/>
</dbReference>
<dbReference type="NCBIfam" id="TIGR01885">
    <property type="entry name" value="Orn_aminotrans"/>
    <property type="match status" value="1"/>
</dbReference>
<dbReference type="PANTHER" id="PTHR11986">
    <property type="entry name" value="AMINOTRANSFERASE CLASS III"/>
    <property type="match status" value="1"/>
</dbReference>
<dbReference type="PANTHER" id="PTHR11986:SF18">
    <property type="entry name" value="ORNITHINE AMINOTRANSFERASE, MITOCHONDRIAL"/>
    <property type="match status" value="1"/>
</dbReference>
<dbReference type="Pfam" id="PF00202">
    <property type="entry name" value="Aminotran_3"/>
    <property type="match status" value="1"/>
</dbReference>
<dbReference type="PIRSF" id="PIRSF000521">
    <property type="entry name" value="Transaminase_4ab_Lys_Orn"/>
    <property type="match status" value="1"/>
</dbReference>
<dbReference type="SUPFAM" id="SSF53383">
    <property type="entry name" value="PLP-dependent transferases"/>
    <property type="match status" value="1"/>
</dbReference>
<dbReference type="PROSITE" id="PS00600">
    <property type="entry name" value="AA_TRANSFER_CLASS_3"/>
    <property type="match status" value="1"/>
</dbReference>
<name>OAT_EMENI</name>